<protein>
    <recommendedName>
        <fullName evidence="1">Ribosome-recycling factor</fullName>
        <shortName evidence="1">RRF</shortName>
    </recommendedName>
    <alternativeName>
        <fullName evidence="1">Ribosome-releasing factor</fullName>
    </alternativeName>
</protein>
<proteinExistence type="inferred from homology"/>
<feature type="chain" id="PRO_1000202090" description="Ribosome-recycling factor">
    <location>
        <begin position="1"/>
        <end position="185"/>
    </location>
</feature>
<comment type="function">
    <text evidence="1">Responsible for the release of ribosomes from messenger RNA at the termination of protein biosynthesis. May increase the efficiency of translation by recycling ribosomes from one round of translation to another.</text>
</comment>
<comment type="subcellular location">
    <subcellularLocation>
        <location evidence="1">Cytoplasm</location>
    </subcellularLocation>
</comment>
<comment type="similarity">
    <text evidence="1">Belongs to the RRF family.</text>
</comment>
<name>RRF_BEUC1</name>
<reference key="1">
    <citation type="journal article" date="2009" name="Stand. Genomic Sci.">
        <title>Complete genome sequence of Beutenbergia cavernae type strain (HKI 0122).</title>
        <authorList>
            <person name="Land M."/>
            <person name="Pukall R."/>
            <person name="Abt B."/>
            <person name="Goker M."/>
            <person name="Rohde M."/>
            <person name="Glavina Del Rio T."/>
            <person name="Tice H."/>
            <person name="Copeland A."/>
            <person name="Cheng J.F."/>
            <person name="Lucas S."/>
            <person name="Chen F."/>
            <person name="Nolan M."/>
            <person name="Bruce D."/>
            <person name="Goodwin L."/>
            <person name="Pitluck S."/>
            <person name="Ivanova N."/>
            <person name="Mavromatis K."/>
            <person name="Ovchinnikova G."/>
            <person name="Pati A."/>
            <person name="Chen A."/>
            <person name="Palaniappan K."/>
            <person name="Hauser L."/>
            <person name="Chang Y.J."/>
            <person name="Jefferies C.C."/>
            <person name="Saunders E."/>
            <person name="Brettin T."/>
            <person name="Detter J.C."/>
            <person name="Han C."/>
            <person name="Chain P."/>
            <person name="Bristow J."/>
            <person name="Eisen J.A."/>
            <person name="Markowitz V."/>
            <person name="Hugenholtz P."/>
            <person name="Kyrpides N.C."/>
            <person name="Klenk H.P."/>
            <person name="Lapidus A."/>
        </authorList>
    </citation>
    <scope>NUCLEOTIDE SEQUENCE [LARGE SCALE GENOMIC DNA]</scope>
    <source>
        <strain>ATCC BAA-8 / DSM 12333 / CCUG 43141 / JCM 11478 / NBRC 16432 / NCIMB 13614 / HKI 0122</strain>
    </source>
</reference>
<accession>C5BWT8</accession>
<organism>
    <name type="scientific">Beutenbergia cavernae (strain ATCC BAA-8 / DSM 12333 / CCUG 43141 / JCM 11478 / NBRC 16432 / NCIMB 13614 / HKI 0122)</name>
    <dbReference type="NCBI Taxonomy" id="471853"/>
    <lineage>
        <taxon>Bacteria</taxon>
        <taxon>Bacillati</taxon>
        <taxon>Actinomycetota</taxon>
        <taxon>Actinomycetes</taxon>
        <taxon>Micrococcales</taxon>
        <taxon>Beutenbergiaceae</taxon>
        <taxon>Beutenbergia</taxon>
    </lineage>
</organism>
<evidence type="ECO:0000255" key="1">
    <source>
        <dbReference type="HAMAP-Rule" id="MF_00040"/>
    </source>
</evidence>
<sequence length="185" mass="20550">MIDDILLEAEDKMDKAVEVARDELGAIRTGRANAALFQKILVDYYGAPTPLQQLAGITIPEARVILINPYDRGAASEIEKALRASDLGVNPSDDGNVIRIVLPQLTEERRREYVKLAKGKGEDARVSVRAVRRKAKDELDRIVRDGEAGEDEVARAEKELELATKSHVDAIDDLLSHKERELLEV</sequence>
<keyword id="KW-0963">Cytoplasm</keyword>
<keyword id="KW-0648">Protein biosynthesis</keyword>
<keyword id="KW-1185">Reference proteome</keyword>
<dbReference type="EMBL" id="CP001618">
    <property type="protein sequence ID" value="ACQ80754.1"/>
    <property type="molecule type" value="Genomic_DNA"/>
</dbReference>
<dbReference type="RefSeq" id="WP_015882994.1">
    <property type="nucleotide sequence ID" value="NC_012669.1"/>
</dbReference>
<dbReference type="SMR" id="C5BWT8"/>
<dbReference type="STRING" id="471853.Bcav_2504"/>
<dbReference type="KEGG" id="bcv:Bcav_2504"/>
<dbReference type="eggNOG" id="COG0233">
    <property type="taxonomic scope" value="Bacteria"/>
</dbReference>
<dbReference type="HOGENOM" id="CLU_073981_2_0_11"/>
<dbReference type="OrthoDB" id="9804006at2"/>
<dbReference type="Proteomes" id="UP000007962">
    <property type="component" value="Chromosome"/>
</dbReference>
<dbReference type="GO" id="GO:0005737">
    <property type="term" value="C:cytoplasm"/>
    <property type="evidence" value="ECO:0007669"/>
    <property type="project" value="UniProtKB-SubCell"/>
</dbReference>
<dbReference type="GO" id="GO:0043023">
    <property type="term" value="F:ribosomal large subunit binding"/>
    <property type="evidence" value="ECO:0007669"/>
    <property type="project" value="TreeGrafter"/>
</dbReference>
<dbReference type="GO" id="GO:0006415">
    <property type="term" value="P:translational termination"/>
    <property type="evidence" value="ECO:0007669"/>
    <property type="project" value="UniProtKB-UniRule"/>
</dbReference>
<dbReference type="CDD" id="cd00520">
    <property type="entry name" value="RRF"/>
    <property type="match status" value="1"/>
</dbReference>
<dbReference type="FunFam" id="1.10.132.20:FF:000001">
    <property type="entry name" value="Ribosome-recycling factor"/>
    <property type="match status" value="1"/>
</dbReference>
<dbReference type="FunFam" id="3.30.1360.40:FF:000001">
    <property type="entry name" value="Ribosome-recycling factor"/>
    <property type="match status" value="1"/>
</dbReference>
<dbReference type="Gene3D" id="3.30.1360.40">
    <property type="match status" value="1"/>
</dbReference>
<dbReference type="Gene3D" id="1.10.132.20">
    <property type="entry name" value="Ribosome-recycling factor"/>
    <property type="match status" value="1"/>
</dbReference>
<dbReference type="HAMAP" id="MF_00040">
    <property type="entry name" value="RRF"/>
    <property type="match status" value="1"/>
</dbReference>
<dbReference type="InterPro" id="IPR002661">
    <property type="entry name" value="Ribosome_recyc_fac"/>
</dbReference>
<dbReference type="InterPro" id="IPR023584">
    <property type="entry name" value="Ribosome_recyc_fac_dom"/>
</dbReference>
<dbReference type="InterPro" id="IPR036191">
    <property type="entry name" value="RRF_sf"/>
</dbReference>
<dbReference type="NCBIfam" id="TIGR00496">
    <property type="entry name" value="frr"/>
    <property type="match status" value="1"/>
</dbReference>
<dbReference type="PANTHER" id="PTHR20982:SF3">
    <property type="entry name" value="MITOCHONDRIAL RIBOSOME RECYCLING FACTOR PSEUDO 1"/>
    <property type="match status" value="1"/>
</dbReference>
<dbReference type="PANTHER" id="PTHR20982">
    <property type="entry name" value="RIBOSOME RECYCLING FACTOR"/>
    <property type="match status" value="1"/>
</dbReference>
<dbReference type="Pfam" id="PF01765">
    <property type="entry name" value="RRF"/>
    <property type="match status" value="1"/>
</dbReference>
<dbReference type="SUPFAM" id="SSF55194">
    <property type="entry name" value="Ribosome recycling factor, RRF"/>
    <property type="match status" value="1"/>
</dbReference>
<gene>
    <name evidence="1" type="primary">frr</name>
    <name type="ordered locus">Bcav_2504</name>
</gene>